<comment type="function">
    <text evidence="1">Bidirectionally degrades single-stranded DNA into large acid-insoluble oligonucleotides, which are then degraded further into small acid-soluble oligonucleotides.</text>
</comment>
<comment type="catalytic activity">
    <reaction evidence="1">
        <text>Exonucleolytic cleavage in either 5'- to 3'- or 3'- to 5'-direction to yield nucleoside 5'-phosphates.</text>
        <dbReference type="EC" id="3.1.11.6"/>
    </reaction>
</comment>
<comment type="subunit">
    <text evidence="1">Heterooligomer composed of large and small subunits.</text>
</comment>
<comment type="subcellular location">
    <subcellularLocation>
        <location evidence="1">Cytoplasm</location>
    </subcellularLocation>
</comment>
<comment type="similarity">
    <text evidence="1">Belongs to the XseA family.</text>
</comment>
<name>EX7L_ACHLI</name>
<proteinExistence type="inferred from homology"/>
<feature type="chain" id="PRO_1000200654" description="Exodeoxyribonuclease 7 large subunit">
    <location>
        <begin position="1"/>
        <end position="446"/>
    </location>
</feature>
<protein>
    <recommendedName>
        <fullName evidence="1">Exodeoxyribonuclease 7 large subunit</fullName>
        <ecNumber evidence="1">3.1.11.6</ecNumber>
    </recommendedName>
    <alternativeName>
        <fullName evidence="1">Exodeoxyribonuclease VII large subunit</fullName>
        <shortName evidence="1">Exonuclease VII large subunit</shortName>
    </alternativeName>
</protein>
<gene>
    <name evidence="1" type="primary">xseA</name>
    <name type="ordered locus">ACL_0476</name>
</gene>
<evidence type="ECO:0000255" key="1">
    <source>
        <dbReference type="HAMAP-Rule" id="MF_00378"/>
    </source>
</evidence>
<reference key="1">
    <citation type="journal article" date="2011" name="J. Bacteriol.">
        <title>Complete genome and proteome of Acholeplasma laidlawii.</title>
        <authorList>
            <person name="Lazarev V.N."/>
            <person name="Levitskii S.A."/>
            <person name="Basovskii Y.I."/>
            <person name="Chukin M.M."/>
            <person name="Akopian T.A."/>
            <person name="Vereshchagin V.V."/>
            <person name="Kostrjukova E.S."/>
            <person name="Kovaleva G.Y."/>
            <person name="Kazanov M.D."/>
            <person name="Malko D.B."/>
            <person name="Vitreschak A.G."/>
            <person name="Sernova N.V."/>
            <person name="Gelfand M.S."/>
            <person name="Demina I.A."/>
            <person name="Serebryakova M.V."/>
            <person name="Galyamina M.A."/>
            <person name="Vtyurin N.N."/>
            <person name="Rogov S.I."/>
            <person name="Alexeev D.G."/>
            <person name="Ladygina V.G."/>
            <person name="Govorun V.M."/>
        </authorList>
    </citation>
    <scope>NUCLEOTIDE SEQUENCE [LARGE SCALE GENOMIC DNA]</scope>
    <source>
        <strain>PG-8A</strain>
    </source>
</reference>
<dbReference type="EC" id="3.1.11.6" evidence="1"/>
<dbReference type="EMBL" id="CP000896">
    <property type="protein sequence ID" value="ABX81095.1"/>
    <property type="molecule type" value="Genomic_DNA"/>
</dbReference>
<dbReference type="RefSeq" id="WP_012242426.1">
    <property type="nucleotide sequence ID" value="NC_010163.1"/>
</dbReference>
<dbReference type="SMR" id="A9NFG5"/>
<dbReference type="STRING" id="441768.ACL_0476"/>
<dbReference type="GeneID" id="41338655"/>
<dbReference type="KEGG" id="acl:ACL_0476"/>
<dbReference type="eggNOG" id="COG1570">
    <property type="taxonomic scope" value="Bacteria"/>
</dbReference>
<dbReference type="HOGENOM" id="CLU_023625_3_1_14"/>
<dbReference type="OrthoDB" id="9802795at2"/>
<dbReference type="Proteomes" id="UP000008558">
    <property type="component" value="Chromosome"/>
</dbReference>
<dbReference type="GO" id="GO:0005737">
    <property type="term" value="C:cytoplasm"/>
    <property type="evidence" value="ECO:0007669"/>
    <property type="project" value="UniProtKB-SubCell"/>
</dbReference>
<dbReference type="GO" id="GO:0009318">
    <property type="term" value="C:exodeoxyribonuclease VII complex"/>
    <property type="evidence" value="ECO:0007669"/>
    <property type="project" value="InterPro"/>
</dbReference>
<dbReference type="GO" id="GO:0008855">
    <property type="term" value="F:exodeoxyribonuclease VII activity"/>
    <property type="evidence" value="ECO:0007669"/>
    <property type="project" value="UniProtKB-UniRule"/>
</dbReference>
<dbReference type="GO" id="GO:0003676">
    <property type="term" value="F:nucleic acid binding"/>
    <property type="evidence" value="ECO:0007669"/>
    <property type="project" value="InterPro"/>
</dbReference>
<dbReference type="GO" id="GO:0006308">
    <property type="term" value="P:DNA catabolic process"/>
    <property type="evidence" value="ECO:0007669"/>
    <property type="project" value="UniProtKB-UniRule"/>
</dbReference>
<dbReference type="CDD" id="cd04489">
    <property type="entry name" value="ExoVII_LU_OBF"/>
    <property type="match status" value="1"/>
</dbReference>
<dbReference type="HAMAP" id="MF_00378">
    <property type="entry name" value="Exonuc_7_L"/>
    <property type="match status" value="1"/>
</dbReference>
<dbReference type="InterPro" id="IPR003753">
    <property type="entry name" value="Exonuc_VII_L"/>
</dbReference>
<dbReference type="InterPro" id="IPR020579">
    <property type="entry name" value="Exonuc_VII_lsu_C"/>
</dbReference>
<dbReference type="InterPro" id="IPR025824">
    <property type="entry name" value="OB-fold_nuc-bd_dom"/>
</dbReference>
<dbReference type="NCBIfam" id="TIGR00237">
    <property type="entry name" value="xseA"/>
    <property type="match status" value="1"/>
</dbReference>
<dbReference type="PANTHER" id="PTHR30008">
    <property type="entry name" value="EXODEOXYRIBONUCLEASE 7 LARGE SUBUNIT"/>
    <property type="match status" value="1"/>
</dbReference>
<dbReference type="PANTHER" id="PTHR30008:SF0">
    <property type="entry name" value="EXODEOXYRIBONUCLEASE 7 LARGE SUBUNIT"/>
    <property type="match status" value="1"/>
</dbReference>
<dbReference type="Pfam" id="PF02601">
    <property type="entry name" value="Exonuc_VII_L"/>
    <property type="match status" value="1"/>
</dbReference>
<dbReference type="Pfam" id="PF13742">
    <property type="entry name" value="tRNA_anti_2"/>
    <property type="match status" value="1"/>
</dbReference>
<sequence>MNEQKYLSVSALTEYIKVKLENDNHLKRVFLKGEISNFTHHGSGHLYFSLKDEDAAISAMMFKTYASTLSFKPKAGDKVLVEGYISLYKARGTYSISIFSMTLDGIGELFLKYEQNRKMFQELGYFDESLKKPIPKFPKIIAVITSETGAVIQDIKTTISRRYLLAKIELYPILVQGEGSKDDIVKTLARVNRESQADVIILGRGGGSIEDLWSFNEAEVVVAIHQSKIPVITAIGHETDTTLSDYVSDLRAPTPTAAAELATPNMADLIKEIKDKVQLSQYYMNERIKNYTALILNLDERLELASPKSKLELEHKQIDNLTSKLTYFYKSKLTDNLNQVRLLSQRLTSPDEKIERYKERIETLTSRINLLYKKQVDLKTYEYQSSLKQLQGLDPLRIMQRGFSLTTKNQKVITSIEQINTNDELDIQYKDGTAKVKVLSKEGKHI</sequence>
<organism>
    <name type="scientific">Acholeplasma laidlawii (strain PG-8A)</name>
    <dbReference type="NCBI Taxonomy" id="441768"/>
    <lineage>
        <taxon>Bacteria</taxon>
        <taxon>Bacillati</taxon>
        <taxon>Mycoplasmatota</taxon>
        <taxon>Mollicutes</taxon>
        <taxon>Acholeplasmatales</taxon>
        <taxon>Acholeplasmataceae</taxon>
        <taxon>Acholeplasma</taxon>
    </lineage>
</organism>
<accession>A9NFG5</accession>
<keyword id="KW-0963">Cytoplasm</keyword>
<keyword id="KW-0269">Exonuclease</keyword>
<keyword id="KW-0378">Hydrolase</keyword>
<keyword id="KW-0540">Nuclease</keyword>
<keyword id="KW-1185">Reference proteome</keyword>